<name>SYY_SHEON</name>
<proteinExistence type="inferred from homology"/>
<sequence length="398" mass="44028">MADLDQVLAEIRRGTDEILLESDLLEKLKKGRPLRIKLGADPTAPDIHLGHTVILNKLRLFQELGHEVIFLIGDFTGMVGDPSGKNSTRPPLTREQVLANAETYKEQVYKILDPAKTRIEFNSSWLEPLGAAGMIRLASQQTVARMMERDDFKKRYASGQSIAIHEFMYPLLQGYDSVALKADVELGGTDQKFNLLMGRELQKAEGQKPQAVIMMPLLEGLDGVKKMSKSAHNYIGVSEPANEMFGKIMSISDELMWRYFELLSFRPLAEIEQFKQDIANGANPRDTKISLAKEIIARFHDAAAAESAHQAFIDRFQKGAIPDDIPEVELAAGEGLAIANLLKDADLVGSTSDALRMIKQGAVKMDGEKIDDSRMTLSAGTVAVFQVGKRKFAKVTLV</sequence>
<comment type="function">
    <text evidence="1">Catalyzes the attachment of tyrosine to tRNA(Tyr) in a two-step reaction: tyrosine is first activated by ATP to form Tyr-AMP and then transferred to the acceptor end of tRNA(Tyr).</text>
</comment>
<comment type="catalytic activity">
    <reaction evidence="1">
        <text>tRNA(Tyr) + L-tyrosine + ATP = L-tyrosyl-tRNA(Tyr) + AMP + diphosphate + H(+)</text>
        <dbReference type="Rhea" id="RHEA:10220"/>
        <dbReference type="Rhea" id="RHEA-COMP:9706"/>
        <dbReference type="Rhea" id="RHEA-COMP:9707"/>
        <dbReference type="ChEBI" id="CHEBI:15378"/>
        <dbReference type="ChEBI" id="CHEBI:30616"/>
        <dbReference type="ChEBI" id="CHEBI:33019"/>
        <dbReference type="ChEBI" id="CHEBI:58315"/>
        <dbReference type="ChEBI" id="CHEBI:78442"/>
        <dbReference type="ChEBI" id="CHEBI:78536"/>
        <dbReference type="ChEBI" id="CHEBI:456215"/>
        <dbReference type="EC" id="6.1.1.1"/>
    </reaction>
</comment>
<comment type="subunit">
    <text evidence="1">Homodimer.</text>
</comment>
<comment type="subcellular location">
    <subcellularLocation>
        <location evidence="1">Cytoplasm</location>
    </subcellularLocation>
</comment>
<comment type="similarity">
    <text evidence="1">Belongs to the class-I aminoacyl-tRNA synthetase family. TyrS type 2 subfamily.</text>
</comment>
<accession>Q8EHB3</accession>
<keyword id="KW-0030">Aminoacyl-tRNA synthetase</keyword>
<keyword id="KW-0067">ATP-binding</keyword>
<keyword id="KW-0963">Cytoplasm</keyword>
<keyword id="KW-0436">Ligase</keyword>
<keyword id="KW-0547">Nucleotide-binding</keyword>
<keyword id="KW-0648">Protein biosynthesis</keyword>
<keyword id="KW-1185">Reference proteome</keyword>
<keyword id="KW-0694">RNA-binding</keyword>
<organism>
    <name type="scientific">Shewanella oneidensis (strain ATCC 700550 / JCM 31522 / CIP 106686 / LMG 19005 / NCIMB 14063 / MR-1)</name>
    <dbReference type="NCBI Taxonomy" id="211586"/>
    <lineage>
        <taxon>Bacteria</taxon>
        <taxon>Pseudomonadati</taxon>
        <taxon>Pseudomonadota</taxon>
        <taxon>Gammaproteobacteria</taxon>
        <taxon>Alteromonadales</taxon>
        <taxon>Shewanellaceae</taxon>
        <taxon>Shewanella</taxon>
    </lineage>
</organism>
<gene>
    <name evidence="1" type="primary">tyrS</name>
    <name type="ordered locus">SO_1315</name>
</gene>
<dbReference type="EC" id="6.1.1.1" evidence="1"/>
<dbReference type="EMBL" id="AE014299">
    <property type="protein sequence ID" value="AAN54380.1"/>
    <property type="molecule type" value="Genomic_DNA"/>
</dbReference>
<dbReference type="RefSeq" id="NP_716935.1">
    <property type="nucleotide sequence ID" value="NC_004347.2"/>
</dbReference>
<dbReference type="RefSeq" id="WP_011071526.1">
    <property type="nucleotide sequence ID" value="NC_004347.2"/>
</dbReference>
<dbReference type="SMR" id="Q8EHB3"/>
<dbReference type="STRING" id="211586.SO_1315"/>
<dbReference type="PaxDb" id="211586-SO_1315"/>
<dbReference type="KEGG" id="son:SO_1315"/>
<dbReference type="PATRIC" id="fig|211586.12.peg.1266"/>
<dbReference type="eggNOG" id="COG0162">
    <property type="taxonomic scope" value="Bacteria"/>
</dbReference>
<dbReference type="HOGENOM" id="CLU_024003_5_0_6"/>
<dbReference type="OrthoDB" id="9804243at2"/>
<dbReference type="PhylomeDB" id="Q8EHB3"/>
<dbReference type="BioCyc" id="SONE211586:G1GMP-1215-MONOMER"/>
<dbReference type="Proteomes" id="UP000008186">
    <property type="component" value="Chromosome"/>
</dbReference>
<dbReference type="GO" id="GO:0005829">
    <property type="term" value="C:cytosol"/>
    <property type="evidence" value="ECO:0000318"/>
    <property type="project" value="GO_Central"/>
</dbReference>
<dbReference type="GO" id="GO:0005524">
    <property type="term" value="F:ATP binding"/>
    <property type="evidence" value="ECO:0007669"/>
    <property type="project" value="UniProtKB-UniRule"/>
</dbReference>
<dbReference type="GO" id="GO:0003723">
    <property type="term" value="F:RNA binding"/>
    <property type="evidence" value="ECO:0007669"/>
    <property type="project" value="UniProtKB-KW"/>
</dbReference>
<dbReference type="GO" id="GO:0004831">
    <property type="term" value="F:tyrosine-tRNA ligase activity"/>
    <property type="evidence" value="ECO:0000318"/>
    <property type="project" value="GO_Central"/>
</dbReference>
<dbReference type="GO" id="GO:0043039">
    <property type="term" value="P:tRNA aminoacylation"/>
    <property type="evidence" value="ECO:0000318"/>
    <property type="project" value="GO_Central"/>
</dbReference>
<dbReference type="GO" id="GO:0006437">
    <property type="term" value="P:tyrosyl-tRNA aminoacylation"/>
    <property type="evidence" value="ECO:0007669"/>
    <property type="project" value="UniProtKB-UniRule"/>
</dbReference>
<dbReference type="CDD" id="cd00165">
    <property type="entry name" value="S4"/>
    <property type="match status" value="1"/>
</dbReference>
<dbReference type="CDD" id="cd00805">
    <property type="entry name" value="TyrRS_core"/>
    <property type="match status" value="1"/>
</dbReference>
<dbReference type="FunFam" id="1.10.240.10:FF:000006">
    <property type="entry name" value="Tyrosine--tRNA ligase"/>
    <property type="match status" value="1"/>
</dbReference>
<dbReference type="FunFam" id="3.10.290.10:FF:000022">
    <property type="entry name" value="Tyrosine--tRNA ligase"/>
    <property type="match status" value="1"/>
</dbReference>
<dbReference type="FunFam" id="3.40.50.620:FF:000061">
    <property type="entry name" value="Tyrosine--tRNA ligase"/>
    <property type="match status" value="1"/>
</dbReference>
<dbReference type="Gene3D" id="3.40.50.620">
    <property type="entry name" value="HUPs"/>
    <property type="match status" value="1"/>
</dbReference>
<dbReference type="Gene3D" id="3.10.290.10">
    <property type="entry name" value="RNA-binding S4 domain"/>
    <property type="match status" value="1"/>
</dbReference>
<dbReference type="Gene3D" id="1.10.240.10">
    <property type="entry name" value="Tyrosyl-Transfer RNA Synthetase"/>
    <property type="match status" value="1"/>
</dbReference>
<dbReference type="HAMAP" id="MF_02007">
    <property type="entry name" value="Tyr_tRNA_synth_type2"/>
    <property type="match status" value="1"/>
</dbReference>
<dbReference type="InterPro" id="IPR001412">
    <property type="entry name" value="aa-tRNA-synth_I_CS"/>
</dbReference>
<dbReference type="InterPro" id="IPR002305">
    <property type="entry name" value="aa-tRNA-synth_Ic"/>
</dbReference>
<dbReference type="InterPro" id="IPR014729">
    <property type="entry name" value="Rossmann-like_a/b/a_fold"/>
</dbReference>
<dbReference type="InterPro" id="IPR036986">
    <property type="entry name" value="S4_RNA-bd_sf"/>
</dbReference>
<dbReference type="InterPro" id="IPR054608">
    <property type="entry name" value="SYY-like_C"/>
</dbReference>
<dbReference type="InterPro" id="IPR002307">
    <property type="entry name" value="Tyr-tRNA-ligase"/>
</dbReference>
<dbReference type="InterPro" id="IPR024088">
    <property type="entry name" value="Tyr-tRNA-ligase_bac-type"/>
</dbReference>
<dbReference type="InterPro" id="IPR024108">
    <property type="entry name" value="Tyr-tRNA-ligase_bac_2"/>
</dbReference>
<dbReference type="NCBIfam" id="TIGR00234">
    <property type="entry name" value="tyrS"/>
    <property type="match status" value="1"/>
</dbReference>
<dbReference type="PANTHER" id="PTHR11766:SF1">
    <property type="entry name" value="TYROSINE--TRNA LIGASE"/>
    <property type="match status" value="1"/>
</dbReference>
<dbReference type="PANTHER" id="PTHR11766">
    <property type="entry name" value="TYROSYL-TRNA SYNTHETASE"/>
    <property type="match status" value="1"/>
</dbReference>
<dbReference type="Pfam" id="PF22421">
    <property type="entry name" value="SYY_C-terminal"/>
    <property type="match status" value="1"/>
</dbReference>
<dbReference type="Pfam" id="PF00579">
    <property type="entry name" value="tRNA-synt_1b"/>
    <property type="match status" value="1"/>
</dbReference>
<dbReference type="PRINTS" id="PR01040">
    <property type="entry name" value="TRNASYNTHTYR"/>
</dbReference>
<dbReference type="SUPFAM" id="SSF55174">
    <property type="entry name" value="Alpha-L RNA-binding motif"/>
    <property type="match status" value="1"/>
</dbReference>
<dbReference type="SUPFAM" id="SSF52374">
    <property type="entry name" value="Nucleotidylyl transferase"/>
    <property type="match status" value="1"/>
</dbReference>
<dbReference type="PROSITE" id="PS00178">
    <property type="entry name" value="AA_TRNA_LIGASE_I"/>
    <property type="match status" value="1"/>
</dbReference>
<dbReference type="PROSITE" id="PS50889">
    <property type="entry name" value="S4"/>
    <property type="match status" value="1"/>
</dbReference>
<feature type="chain" id="PRO_0000236761" description="Tyrosine--tRNA ligase">
    <location>
        <begin position="1"/>
        <end position="398"/>
    </location>
</feature>
<feature type="domain" description="S4 RNA-binding" evidence="1">
    <location>
        <begin position="336"/>
        <end position="397"/>
    </location>
</feature>
<feature type="short sequence motif" description="'HIGH' region">
    <location>
        <begin position="42"/>
        <end position="51"/>
    </location>
</feature>
<feature type="short sequence motif" description="'KMSKS' region">
    <location>
        <begin position="226"/>
        <end position="230"/>
    </location>
</feature>
<feature type="binding site" evidence="1">
    <location>
        <position position="229"/>
    </location>
    <ligand>
        <name>ATP</name>
        <dbReference type="ChEBI" id="CHEBI:30616"/>
    </ligand>
</feature>
<reference key="1">
    <citation type="journal article" date="2002" name="Nat. Biotechnol.">
        <title>Genome sequence of the dissimilatory metal ion-reducing bacterium Shewanella oneidensis.</title>
        <authorList>
            <person name="Heidelberg J.F."/>
            <person name="Paulsen I.T."/>
            <person name="Nelson K.E."/>
            <person name="Gaidos E.J."/>
            <person name="Nelson W.C."/>
            <person name="Read T.D."/>
            <person name="Eisen J.A."/>
            <person name="Seshadri R."/>
            <person name="Ward N.L."/>
            <person name="Methe B.A."/>
            <person name="Clayton R.A."/>
            <person name="Meyer T."/>
            <person name="Tsapin A."/>
            <person name="Scott J."/>
            <person name="Beanan M.J."/>
            <person name="Brinkac L.M."/>
            <person name="Daugherty S.C."/>
            <person name="DeBoy R.T."/>
            <person name="Dodson R.J."/>
            <person name="Durkin A.S."/>
            <person name="Haft D.H."/>
            <person name="Kolonay J.F."/>
            <person name="Madupu R."/>
            <person name="Peterson J.D."/>
            <person name="Umayam L.A."/>
            <person name="White O."/>
            <person name="Wolf A.M."/>
            <person name="Vamathevan J.J."/>
            <person name="Weidman J.F."/>
            <person name="Impraim M."/>
            <person name="Lee K."/>
            <person name="Berry K.J."/>
            <person name="Lee C."/>
            <person name="Mueller J."/>
            <person name="Khouri H.M."/>
            <person name="Gill J."/>
            <person name="Utterback T.R."/>
            <person name="McDonald L.A."/>
            <person name="Feldblyum T.V."/>
            <person name="Smith H.O."/>
            <person name="Venter J.C."/>
            <person name="Nealson K.H."/>
            <person name="Fraser C.M."/>
        </authorList>
    </citation>
    <scope>NUCLEOTIDE SEQUENCE [LARGE SCALE GENOMIC DNA]</scope>
    <source>
        <strain>ATCC 700550 / JCM 31522 / CIP 106686 / LMG 19005 / NCIMB 14063 / MR-1</strain>
    </source>
</reference>
<evidence type="ECO:0000255" key="1">
    <source>
        <dbReference type="HAMAP-Rule" id="MF_02007"/>
    </source>
</evidence>
<protein>
    <recommendedName>
        <fullName evidence="1">Tyrosine--tRNA ligase</fullName>
        <ecNumber evidence="1">6.1.1.1</ecNumber>
    </recommendedName>
    <alternativeName>
        <fullName evidence="1">Tyrosyl-tRNA synthetase</fullName>
        <shortName evidence="1">TyrRS</shortName>
    </alternativeName>
</protein>